<organism>
    <name type="scientific">Arabidopsis thaliana</name>
    <name type="common">Mouse-ear cress</name>
    <dbReference type="NCBI Taxonomy" id="3702"/>
    <lineage>
        <taxon>Eukaryota</taxon>
        <taxon>Viridiplantae</taxon>
        <taxon>Streptophyta</taxon>
        <taxon>Embryophyta</taxon>
        <taxon>Tracheophyta</taxon>
        <taxon>Spermatophyta</taxon>
        <taxon>Magnoliopsida</taxon>
        <taxon>eudicotyledons</taxon>
        <taxon>Gunneridae</taxon>
        <taxon>Pentapetalae</taxon>
        <taxon>rosids</taxon>
        <taxon>malvids</taxon>
        <taxon>Brassicales</taxon>
        <taxon>Brassicaceae</taxon>
        <taxon>Camelineae</taxon>
        <taxon>Arabidopsis</taxon>
    </lineage>
</organism>
<protein>
    <recommendedName>
        <fullName>Phosphoglucan phosphatase LSF1, chloroplastic</fullName>
        <ecNumber>3.1.3.-</ecNumber>
    </recommendedName>
    <alternativeName>
        <fullName>Phosphoglucan phosphatase like sex Four1</fullName>
    </alternativeName>
    <alternativeName>
        <fullName>Protein LIKE SEX4 1</fullName>
    </alternativeName>
</protein>
<comment type="function">
    <text evidence="4">Starch granule-associated phosphoglucan phosphatase involved in the control of starch accumulation. Participates in the regulation of the initial steps of starch degradation at the granule surface. May release a different set of phosphate groups from those removed by DSP4.</text>
</comment>
<comment type="subcellular location">
    <subcellularLocation>
        <location evidence="4">Plastid</location>
        <location evidence="4">Chloroplast</location>
    </subcellularLocation>
    <text>Located on the surface of starch granules.</text>
</comment>
<comment type="disruption phenotype">
    <text evidence="4">Slight reduction in rosette size and fresh weight and increased starch content in leaves.</text>
</comment>
<comment type="sequence caution" evidence="5">
    <conflict type="erroneous gene model prediction">
        <sequence resource="EMBL-CDS" id="AAF01536"/>
    </conflict>
</comment>
<evidence type="ECO:0000250" key="1"/>
<evidence type="ECO:0000255" key="2"/>
<evidence type="ECO:0000255" key="3">
    <source>
        <dbReference type="PROSITE-ProRule" id="PRU00160"/>
    </source>
</evidence>
<evidence type="ECO:0000269" key="4">
    <source>
    </source>
</evidence>
<evidence type="ECO:0000305" key="5"/>
<dbReference type="EC" id="3.1.3.-"/>
<dbReference type="EMBL" id="AC009325">
    <property type="protein sequence ID" value="AAF01536.1"/>
    <property type="status" value="ALT_SEQ"/>
    <property type="molecule type" value="Genomic_DNA"/>
</dbReference>
<dbReference type="EMBL" id="CP002686">
    <property type="protein sequence ID" value="AEE73678.1"/>
    <property type="molecule type" value="Genomic_DNA"/>
</dbReference>
<dbReference type="EMBL" id="AY086403">
    <property type="protein sequence ID" value="AAM64470.1"/>
    <property type="molecule type" value="mRNA"/>
</dbReference>
<dbReference type="RefSeq" id="NP_566139.1">
    <property type="nucleotide sequence ID" value="NM_111017.3"/>
</dbReference>
<dbReference type="PDB" id="8J5D">
    <property type="method" value="EM"/>
    <property type="resolution" value="3.00 A"/>
    <property type="chains" value="D=71-591"/>
</dbReference>
<dbReference type="PDBsum" id="8J5D"/>
<dbReference type="EMDB" id="EMD-35985"/>
<dbReference type="SMR" id="F4J117"/>
<dbReference type="BioGRID" id="6460">
    <property type="interactions" value="1"/>
</dbReference>
<dbReference type="FunCoup" id="F4J117">
    <property type="interactions" value="1082"/>
</dbReference>
<dbReference type="STRING" id="3702.F4J117"/>
<dbReference type="CAZy" id="CBM48">
    <property type="family name" value="Carbohydrate-Binding Module Family 48"/>
</dbReference>
<dbReference type="iPTMnet" id="F4J117"/>
<dbReference type="PaxDb" id="3702-AT3G01510.1"/>
<dbReference type="ProteomicsDB" id="238591"/>
<dbReference type="EnsemblPlants" id="AT3G01510.1">
    <property type="protein sequence ID" value="AT3G01510.1"/>
    <property type="gene ID" value="AT3G01510"/>
</dbReference>
<dbReference type="GeneID" id="821127"/>
<dbReference type="Gramene" id="AT3G01510.1">
    <property type="protein sequence ID" value="AT3G01510.1"/>
    <property type="gene ID" value="AT3G01510"/>
</dbReference>
<dbReference type="KEGG" id="ath:AT3G01510"/>
<dbReference type="Araport" id="AT3G01510"/>
<dbReference type="TAIR" id="AT3G01510">
    <property type="gene designation" value="LSF1"/>
</dbReference>
<dbReference type="eggNOG" id="KOG1616">
    <property type="taxonomic scope" value="Eukaryota"/>
</dbReference>
<dbReference type="eggNOG" id="KOG1716">
    <property type="taxonomic scope" value="Eukaryota"/>
</dbReference>
<dbReference type="HOGENOM" id="CLU_020896_0_0_1"/>
<dbReference type="InParanoid" id="F4J117"/>
<dbReference type="OMA" id="GLHTCRP"/>
<dbReference type="PRO" id="PR:F4J117"/>
<dbReference type="Proteomes" id="UP000006548">
    <property type="component" value="Chromosome 3"/>
</dbReference>
<dbReference type="ExpressionAtlas" id="F4J117">
    <property type="expression patterns" value="baseline and differential"/>
</dbReference>
<dbReference type="GO" id="GO:0009507">
    <property type="term" value="C:chloroplast"/>
    <property type="evidence" value="ECO:0000314"/>
    <property type="project" value="TAIR"/>
</dbReference>
<dbReference type="GO" id="GO:0009569">
    <property type="term" value="C:chloroplast starch grain"/>
    <property type="evidence" value="ECO:0000314"/>
    <property type="project" value="UniProtKB"/>
</dbReference>
<dbReference type="GO" id="GO:0009570">
    <property type="term" value="C:chloroplast stroma"/>
    <property type="evidence" value="ECO:0000314"/>
    <property type="project" value="TAIR"/>
</dbReference>
<dbReference type="GO" id="GO:0043036">
    <property type="term" value="C:starch grain"/>
    <property type="evidence" value="ECO:0000314"/>
    <property type="project" value="TAIR"/>
</dbReference>
<dbReference type="GO" id="GO:0019203">
    <property type="term" value="F:carbohydrate phosphatase activity"/>
    <property type="evidence" value="ECO:0000315"/>
    <property type="project" value="UniProtKB"/>
</dbReference>
<dbReference type="GO" id="GO:0004721">
    <property type="term" value="F:phosphoprotein phosphatase activity"/>
    <property type="evidence" value="ECO:0007669"/>
    <property type="project" value="UniProtKB-KW"/>
</dbReference>
<dbReference type="GO" id="GO:0005983">
    <property type="term" value="P:starch catabolic process"/>
    <property type="evidence" value="ECO:0000315"/>
    <property type="project" value="UniProtKB"/>
</dbReference>
<dbReference type="CDD" id="cd14526">
    <property type="entry name" value="DSP_laforin-like"/>
    <property type="match status" value="1"/>
</dbReference>
<dbReference type="CDD" id="cd02859">
    <property type="entry name" value="E_set_AMPKbeta_like_N"/>
    <property type="match status" value="1"/>
</dbReference>
<dbReference type="FunFam" id="3.90.190.10:FF:000072">
    <property type="entry name" value="Phosphoglucan phosphatase LSF1 chloroplastic"/>
    <property type="match status" value="1"/>
</dbReference>
<dbReference type="FunFam" id="2.60.40.10:FF:000972">
    <property type="entry name" value="Phosphoglucan phosphatase LSF1, chloroplastic"/>
    <property type="match status" value="1"/>
</dbReference>
<dbReference type="Gene3D" id="2.60.40.10">
    <property type="entry name" value="Immunoglobulins"/>
    <property type="match status" value="1"/>
</dbReference>
<dbReference type="Gene3D" id="3.90.190.10">
    <property type="entry name" value="Protein tyrosine phosphatase superfamily"/>
    <property type="match status" value="1"/>
</dbReference>
<dbReference type="InterPro" id="IPR032640">
    <property type="entry name" value="AMPK1_CBM"/>
</dbReference>
<dbReference type="InterPro" id="IPR045204">
    <property type="entry name" value="DSP_laforin-like"/>
</dbReference>
<dbReference type="InterPro" id="IPR000340">
    <property type="entry name" value="Dual-sp_phosphatase_cat-dom"/>
</dbReference>
<dbReference type="InterPro" id="IPR013783">
    <property type="entry name" value="Ig-like_fold"/>
</dbReference>
<dbReference type="InterPro" id="IPR014756">
    <property type="entry name" value="Ig_E-set"/>
</dbReference>
<dbReference type="InterPro" id="IPR036034">
    <property type="entry name" value="PDZ_sf"/>
</dbReference>
<dbReference type="InterPro" id="IPR029021">
    <property type="entry name" value="Prot-tyrosine_phosphatase-like"/>
</dbReference>
<dbReference type="InterPro" id="IPR020422">
    <property type="entry name" value="TYR_PHOSPHATASE_DUAL_dom"/>
</dbReference>
<dbReference type="PANTHER" id="PTHR47661">
    <property type="entry name" value="PHOSPHOGLUCAN PHOSPHATASE LSF1, CHLOROPLASTIC"/>
    <property type="match status" value="1"/>
</dbReference>
<dbReference type="PANTHER" id="PTHR47661:SF2">
    <property type="entry name" value="PHOSPHOGLUCAN PHOSPHATASE LSF1, CHLOROPLASTIC"/>
    <property type="match status" value="1"/>
</dbReference>
<dbReference type="Pfam" id="PF16561">
    <property type="entry name" value="AMPK1_CBM"/>
    <property type="match status" value="1"/>
</dbReference>
<dbReference type="Pfam" id="PF00782">
    <property type="entry name" value="DSPc"/>
    <property type="match status" value="1"/>
</dbReference>
<dbReference type="SMART" id="SM00195">
    <property type="entry name" value="DSPc"/>
    <property type="match status" value="1"/>
</dbReference>
<dbReference type="SUPFAM" id="SSF52799">
    <property type="entry name" value="(Phosphotyrosine protein) phosphatases II"/>
    <property type="match status" value="1"/>
</dbReference>
<dbReference type="SUPFAM" id="SSF81296">
    <property type="entry name" value="E set domains"/>
    <property type="match status" value="1"/>
</dbReference>
<dbReference type="SUPFAM" id="SSF50156">
    <property type="entry name" value="PDZ domain-like"/>
    <property type="match status" value="1"/>
</dbReference>
<dbReference type="PROSITE" id="PS50054">
    <property type="entry name" value="TYR_PHOSPHATASE_DUAL"/>
    <property type="match status" value="1"/>
</dbReference>
<feature type="transit peptide" description="Chloroplast" evidence="2">
    <location>
        <begin position="1"/>
        <end position="61"/>
    </location>
</feature>
<feature type="chain" id="PRO_0000417334" description="Phosphoglucan phosphatase LSF1, chloroplastic">
    <location>
        <begin position="62"/>
        <end position="591"/>
    </location>
</feature>
<feature type="domain" description="Tyrosine-protein phosphatase" evidence="3">
    <location>
        <begin position="291"/>
        <end position="453"/>
    </location>
</feature>
<feature type="active site" description="Phosphocysteine intermediate" evidence="3">
    <location>
        <position position="390"/>
    </location>
</feature>
<feature type="binding site" evidence="1">
    <location>
        <begin position="390"/>
        <end position="396"/>
    </location>
    <ligand>
        <name>substrate</name>
    </ligand>
</feature>
<feature type="sequence conflict" description="In Ref. 3; AAM64470." evidence="5" ref="3">
    <original>I</original>
    <variation>V</variation>
    <location>
        <position position="102"/>
    </location>
</feature>
<keyword id="KW-0002">3D-structure</keyword>
<keyword id="KW-0119">Carbohydrate metabolism</keyword>
<keyword id="KW-0150">Chloroplast</keyword>
<keyword id="KW-0378">Hydrolase</keyword>
<keyword id="KW-0934">Plastid</keyword>
<keyword id="KW-0904">Protein phosphatase</keyword>
<keyword id="KW-1185">Reference proteome</keyword>
<keyword id="KW-0809">Transit peptide</keyword>
<accession>F4J117</accession>
<accession>Q8LCU3</accession>
<accession>Q9SSA3</accession>
<proteinExistence type="evidence at protein level"/>
<gene>
    <name type="primary">LSF1</name>
    <name type="synonym">PTPKIS2</name>
    <name type="ordered locus">At3g01510</name>
    <name type="ORF">F4P13.6</name>
</gene>
<reference key="1">
    <citation type="journal article" date="2000" name="Nature">
        <title>Sequence and analysis of chromosome 3 of the plant Arabidopsis thaliana.</title>
        <authorList>
            <person name="Salanoubat M."/>
            <person name="Lemcke K."/>
            <person name="Rieger M."/>
            <person name="Ansorge W."/>
            <person name="Unseld M."/>
            <person name="Fartmann B."/>
            <person name="Valle G."/>
            <person name="Bloecker H."/>
            <person name="Perez-Alonso M."/>
            <person name="Obermaier B."/>
            <person name="Delseny M."/>
            <person name="Boutry M."/>
            <person name="Grivell L.A."/>
            <person name="Mache R."/>
            <person name="Puigdomenech P."/>
            <person name="De Simone V."/>
            <person name="Choisne N."/>
            <person name="Artiguenave F."/>
            <person name="Robert C."/>
            <person name="Brottier P."/>
            <person name="Wincker P."/>
            <person name="Cattolico L."/>
            <person name="Weissenbach J."/>
            <person name="Saurin W."/>
            <person name="Quetier F."/>
            <person name="Schaefer M."/>
            <person name="Mueller-Auer S."/>
            <person name="Gabel C."/>
            <person name="Fuchs M."/>
            <person name="Benes V."/>
            <person name="Wurmbach E."/>
            <person name="Drzonek H."/>
            <person name="Erfle H."/>
            <person name="Jordan N."/>
            <person name="Bangert S."/>
            <person name="Wiedelmann R."/>
            <person name="Kranz H."/>
            <person name="Voss H."/>
            <person name="Holland R."/>
            <person name="Brandt P."/>
            <person name="Nyakatura G."/>
            <person name="Vezzi A."/>
            <person name="D'Angelo M."/>
            <person name="Pallavicini A."/>
            <person name="Toppo S."/>
            <person name="Simionati B."/>
            <person name="Conrad A."/>
            <person name="Hornischer K."/>
            <person name="Kauer G."/>
            <person name="Loehnert T.-H."/>
            <person name="Nordsiek G."/>
            <person name="Reichelt J."/>
            <person name="Scharfe M."/>
            <person name="Schoen O."/>
            <person name="Bargues M."/>
            <person name="Terol J."/>
            <person name="Climent J."/>
            <person name="Navarro P."/>
            <person name="Collado C."/>
            <person name="Perez-Perez A."/>
            <person name="Ottenwaelder B."/>
            <person name="Duchemin D."/>
            <person name="Cooke R."/>
            <person name="Laudie M."/>
            <person name="Berger-Llauro C."/>
            <person name="Purnelle B."/>
            <person name="Masuy D."/>
            <person name="de Haan M."/>
            <person name="Maarse A.C."/>
            <person name="Alcaraz J.-P."/>
            <person name="Cottet A."/>
            <person name="Casacuberta E."/>
            <person name="Monfort A."/>
            <person name="Argiriou A."/>
            <person name="Flores M."/>
            <person name="Liguori R."/>
            <person name="Vitale D."/>
            <person name="Mannhaupt G."/>
            <person name="Haase D."/>
            <person name="Schoof H."/>
            <person name="Rudd S."/>
            <person name="Zaccaria P."/>
            <person name="Mewes H.-W."/>
            <person name="Mayer K.F.X."/>
            <person name="Kaul S."/>
            <person name="Town C.D."/>
            <person name="Koo H.L."/>
            <person name="Tallon L.J."/>
            <person name="Jenkins J."/>
            <person name="Rooney T."/>
            <person name="Rizzo M."/>
            <person name="Walts A."/>
            <person name="Utterback T."/>
            <person name="Fujii C.Y."/>
            <person name="Shea T.P."/>
            <person name="Creasy T.H."/>
            <person name="Haas B."/>
            <person name="Maiti R."/>
            <person name="Wu D."/>
            <person name="Peterson J."/>
            <person name="Van Aken S."/>
            <person name="Pai G."/>
            <person name="Militscher J."/>
            <person name="Sellers P."/>
            <person name="Gill J.E."/>
            <person name="Feldblyum T.V."/>
            <person name="Preuss D."/>
            <person name="Lin X."/>
            <person name="Nierman W.C."/>
            <person name="Salzberg S.L."/>
            <person name="White O."/>
            <person name="Venter J.C."/>
            <person name="Fraser C.M."/>
            <person name="Kaneko T."/>
            <person name="Nakamura Y."/>
            <person name="Sato S."/>
            <person name="Kato T."/>
            <person name="Asamizu E."/>
            <person name="Sasamoto S."/>
            <person name="Kimura T."/>
            <person name="Idesawa K."/>
            <person name="Kawashima K."/>
            <person name="Kishida Y."/>
            <person name="Kiyokawa C."/>
            <person name="Kohara M."/>
            <person name="Matsumoto M."/>
            <person name="Matsuno A."/>
            <person name="Muraki A."/>
            <person name="Nakayama S."/>
            <person name="Nakazaki N."/>
            <person name="Shinpo S."/>
            <person name="Takeuchi C."/>
            <person name="Wada T."/>
            <person name="Watanabe A."/>
            <person name="Yamada M."/>
            <person name="Yasuda M."/>
            <person name="Tabata S."/>
        </authorList>
    </citation>
    <scope>NUCLEOTIDE SEQUENCE [LARGE SCALE GENOMIC DNA]</scope>
    <source>
        <strain>cv. Columbia</strain>
    </source>
</reference>
<reference key="2">
    <citation type="journal article" date="2017" name="Plant J.">
        <title>Araport11: a complete reannotation of the Arabidopsis thaliana reference genome.</title>
        <authorList>
            <person name="Cheng C.Y."/>
            <person name="Krishnakumar V."/>
            <person name="Chan A.P."/>
            <person name="Thibaud-Nissen F."/>
            <person name="Schobel S."/>
            <person name="Town C.D."/>
        </authorList>
    </citation>
    <scope>GENOME REANNOTATION</scope>
    <source>
        <strain>cv. Columbia</strain>
    </source>
</reference>
<reference key="3">
    <citation type="submission" date="2002-03" db="EMBL/GenBank/DDBJ databases">
        <title>Full-length cDNA from Arabidopsis thaliana.</title>
        <authorList>
            <person name="Brover V.V."/>
            <person name="Troukhan M.E."/>
            <person name="Alexandrov N.A."/>
            <person name="Lu Y.-P."/>
            <person name="Flavell R.B."/>
            <person name="Feldmann K.A."/>
        </authorList>
    </citation>
    <scope>NUCLEOTIDE SEQUENCE [LARGE SCALE MRNA]</scope>
</reference>
<reference key="4">
    <citation type="journal article" date="2007" name="Plant Physiol.">
        <title>Glucan, water dikinase activity stimulates breakdown of starch granules by plastidial beta-amylases.</title>
        <authorList>
            <person name="Edner C."/>
            <person name="Li J."/>
            <person name="Albrecht T."/>
            <person name="Mahlow S."/>
            <person name="Hejazi M."/>
            <person name="Hussain H."/>
            <person name="Kaplan F."/>
            <person name="Guy C."/>
            <person name="Smith S.M."/>
            <person name="Steup M."/>
            <person name="Ritte G."/>
        </authorList>
    </citation>
    <scope>IDENTIFICATION BY MASS SPECTROMETRY</scope>
</reference>
<reference key="5">
    <citation type="journal article" date="2010" name="Plant Physiol.">
        <title>A putative phosphatase, LSF1, is required for normal starch turnover in Arabidopsis leaves.</title>
        <authorList>
            <person name="Comparot-Moss S."/>
            <person name="Koetting O."/>
            <person name="Stettler M."/>
            <person name="Edner C."/>
            <person name="Graf A."/>
            <person name="Weise S.E."/>
            <person name="Streb S."/>
            <person name="Lue W.L."/>
            <person name="MacLean D."/>
            <person name="Mahlow S."/>
            <person name="Ritte G."/>
            <person name="Steup M."/>
            <person name="Chen J."/>
            <person name="Zeeman S.C."/>
            <person name="Smith A.M."/>
        </authorList>
    </citation>
    <scope>FUNCTION</scope>
    <scope>SUBCELLULAR LOCATION</scope>
    <scope>DISRUPTION PHENOTYPE</scope>
</reference>
<name>LSF1_ARATH</name>
<sequence length="591" mass="65741">MAFLQQISGLGALERSCPSIMIGSSFRSGNGRVFDGRGIAYLGSREKFGFNRRRRVVLRVVAMSSSSTPFKMNLNEYMVTLEKPLGIRFALSADGKIFVHAIKKGSNAEKARIIMVGDTLKKASDSSGGTLVEIKDFGDTKKMLVEKTGSFSLVLERPFSPFPIQYLLHLSDLDLLYNRGRVSFVTWNKNLLSSNLRASSQGSGNSGYAAFSSKFFTPQGWKLLNRQSNSFQSGTKKNILSPPISPLVSVFSEDVPGDGEWGYGNFPLEEYIKALDRSKGELSYNHALGMRYSKITEQIYVGSCIQTEEDVENLSEAGITAILNFQGGTEAQNWGIDSQSINDACQKSEVLMINYPIKDADSFDLRKKLPLCVGLLLRLLKKNHRVFVTCTTGFDRSSACVIAYLHWMTDTSLHAAYSFVTGLHACKPDRPAIAWATWDLIAMVDDGKHDGTPTHSVTFVWNGHEGEEVLLVGDFTGNWKEPIKATHKGGPRFETEVRLTQGKYYYKYIINGDWRHSATSPTERDDRGNTNNIIVVGDVANVRPTIQQPRKDANIIKVIERVLTESERFRLAKAARCIAFSVCPIRLCPKS</sequence>